<gene>
    <name evidence="1" type="primary">rpl18</name>
    <name type="ordered locus">PAE2101</name>
</gene>
<accession>Q8ZVV7</accession>
<protein>
    <recommendedName>
        <fullName evidence="1">Large ribosomal subunit protein uL18</fullName>
    </recommendedName>
    <alternativeName>
        <fullName evidence="2">50S ribosomal protein L18</fullName>
    </alternativeName>
</protein>
<feature type="chain" id="PRO_0000131413" description="Large ribosomal subunit protein uL18">
    <location>
        <begin position="1"/>
        <end position="205"/>
    </location>
</feature>
<sequence>MARSGRYKVPFRRRREGLTNYRKRRKLLLSKKPRLVVRKTNKHIIAQIVVAKPQGDVTIVGADTRILAKFGWRGDENNVAAAYLLGLVVGYKARARRVEEAILDIGLHRPAPGARVFAVLKGALDAGLKIPHGEEVLPDEDRIKGKHVAEYAEKLKEENPEAYKARFSRYLQRGLEPEKLPEHFEEVKKKIVEYYEKKLAKVAAQ</sequence>
<evidence type="ECO:0000255" key="1">
    <source>
        <dbReference type="HAMAP-Rule" id="MF_01337"/>
    </source>
</evidence>
<evidence type="ECO:0000305" key="2"/>
<name>RL18_PYRAE</name>
<organism>
    <name type="scientific">Pyrobaculum aerophilum (strain ATCC 51768 / DSM 7523 / JCM 9630 / CIP 104966 / NBRC 100827 / IM2)</name>
    <dbReference type="NCBI Taxonomy" id="178306"/>
    <lineage>
        <taxon>Archaea</taxon>
        <taxon>Thermoproteota</taxon>
        <taxon>Thermoprotei</taxon>
        <taxon>Thermoproteales</taxon>
        <taxon>Thermoproteaceae</taxon>
        <taxon>Pyrobaculum</taxon>
    </lineage>
</organism>
<keyword id="KW-1185">Reference proteome</keyword>
<keyword id="KW-0687">Ribonucleoprotein</keyword>
<keyword id="KW-0689">Ribosomal protein</keyword>
<keyword id="KW-0694">RNA-binding</keyword>
<keyword id="KW-0699">rRNA-binding</keyword>
<comment type="function">
    <text evidence="1">This is one of the proteins that bind and probably mediate the attachment of the 5S RNA into the large ribosomal subunit, where it forms part of the central protuberance.</text>
</comment>
<comment type="subunit">
    <text evidence="1">Part of the 50S ribosomal subunit. Contacts the 5S and 23S rRNAs.</text>
</comment>
<comment type="similarity">
    <text evidence="1">Belongs to the universal ribosomal protein uL18 family.</text>
</comment>
<dbReference type="EMBL" id="AE009441">
    <property type="protein sequence ID" value="AAL63947.1"/>
    <property type="molecule type" value="Genomic_DNA"/>
</dbReference>
<dbReference type="RefSeq" id="WP_011008417.1">
    <property type="nucleotide sequence ID" value="NC_003364.1"/>
</dbReference>
<dbReference type="SMR" id="Q8ZVV7"/>
<dbReference type="FunCoup" id="Q8ZVV7">
    <property type="interactions" value="195"/>
</dbReference>
<dbReference type="STRING" id="178306.PAE2101"/>
<dbReference type="EnsemblBacteria" id="AAL63947">
    <property type="protein sequence ID" value="AAL63947"/>
    <property type="gene ID" value="PAE2101"/>
</dbReference>
<dbReference type="GeneID" id="1464279"/>
<dbReference type="KEGG" id="pai:PAE2101"/>
<dbReference type="PATRIC" id="fig|178306.9.peg.1552"/>
<dbReference type="eggNOG" id="arCOG04088">
    <property type="taxonomic scope" value="Archaea"/>
</dbReference>
<dbReference type="HOGENOM" id="CLU_056222_2_0_2"/>
<dbReference type="InParanoid" id="Q8ZVV7"/>
<dbReference type="Proteomes" id="UP000002439">
    <property type="component" value="Chromosome"/>
</dbReference>
<dbReference type="GO" id="GO:0022625">
    <property type="term" value="C:cytosolic large ribosomal subunit"/>
    <property type="evidence" value="ECO:0000318"/>
    <property type="project" value="GO_Central"/>
</dbReference>
<dbReference type="GO" id="GO:0008097">
    <property type="term" value="F:5S rRNA binding"/>
    <property type="evidence" value="ECO:0000318"/>
    <property type="project" value="GO_Central"/>
</dbReference>
<dbReference type="GO" id="GO:0003735">
    <property type="term" value="F:structural constituent of ribosome"/>
    <property type="evidence" value="ECO:0000318"/>
    <property type="project" value="GO_Central"/>
</dbReference>
<dbReference type="GO" id="GO:0000027">
    <property type="term" value="P:ribosomal large subunit assembly"/>
    <property type="evidence" value="ECO:0000318"/>
    <property type="project" value="GO_Central"/>
</dbReference>
<dbReference type="GO" id="GO:0006412">
    <property type="term" value="P:translation"/>
    <property type="evidence" value="ECO:0007669"/>
    <property type="project" value="UniProtKB-UniRule"/>
</dbReference>
<dbReference type="CDD" id="cd00432">
    <property type="entry name" value="Ribosomal_L18_L5e"/>
    <property type="match status" value="1"/>
</dbReference>
<dbReference type="FunFam" id="3.30.420.100:FF:000008">
    <property type="entry name" value="50S ribosomal protein L18"/>
    <property type="match status" value="1"/>
</dbReference>
<dbReference type="Gene3D" id="3.30.420.100">
    <property type="match status" value="1"/>
</dbReference>
<dbReference type="HAMAP" id="MF_01337_A">
    <property type="entry name" value="Ribosomal_uL18_A"/>
    <property type="match status" value="1"/>
</dbReference>
<dbReference type="InterPro" id="IPR005485">
    <property type="entry name" value="Rbsml_uL18_euk"/>
</dbReference>
<dbReference type="NCBIfam" id="NF006342">
    <property type="entry name" value="PRK08569.1"/>
    <property type="match status" value="1"/>
</dbReference>
<dbReference type="PANTHER" id="PTHR23410:SF12">
    <property type="entry name" value="LARGE RIBOSOMAL SUBUNIT PROTEIN UL18"/>
    <property type="match status" value="1"/>
</dbReference>
<dbReference type="PANTHER" id="PTHR23410">
    <property type="entry name" value="RIBOSOMAL PROTEIN L5-RELATED"/>
    <property type="match status" value="1"/>
</dbReference>
<dbReference type="Pfam" id="PF17144">
    <property type="entry name" value="Ribosomal_L5e"/>
    <property type="match status" value="2"/>
</dbReference>
<dbReference type="SUPFAM" id="SSF53137">
    <property type="entry name" value="Translational machinery components"/>
    <property type="match status" value="1"/>
</dbReference>
<proteinExistence type="inferred from homology"/>
<reference key="1">
    <citation type="journal article" date="2002" name="Proc. Natl. Acad. Sci. U.S.A.">
        <title>Genome sequence of the hyperthermophilic crenarchaeon Pyrobaculum aerophilum.</title>
        <authorList>
            <person name="Fitz-Gibbon S.T."/>
            <person name="Ladner H."/>
            <person name="Kim U.-J."/>
            <person name="Stetter K.O."/>
            <person name="Simon M.I."/>
            <person name="Miller J.H."/>
        </authorList>
    </citation>
    <scope>NUCLEOTIDE SEQUENCE [LARGE SCALE GENOMIC DNA]</scope>
    <source>
        <strain>ATCC 51768 / DSM 7523 / JCM 9630 / CIP 104966 / NBRC 100827 / IM2</strain>
    </source>
</reference>